<accession>Q96NR8</accession>
<accession>B2RDA2</accession>
<accession>Q8TAW6</accession>
<proteinExistence type="evidence at protein level"/>
<evidence type="ECO:0000250" key="1"/>
<evidence type="ECO:0000269" key="2">
    <source>
    </source>
</evidence>
<evidence type="ECO:0000269" key="3">
    <source>
    </source>
</evidence>
<evidence type="ECO:0000269" key="4">
    <source>
    </source>
</evidence>
<evidence type="ECO:0000269" key="5">
    <source>
    </source>
</evidence>
<evidence type="ECO:0000269" key="6">
    <source>
    </source>
</evidence>
<evidence type="ECO:0000269" key="7">
    <source>
    </source>
</evidence>
<evidence type="ECO:0000269" key="8">
    <source>
    </source>
</evidence>
<evidence type="ECO:0000269" key="9">
    <source>
    </source>
</evidence>
<evidence type="ECO:0000269" key="10">
    <source>
    </source>
</evidence>
<evidence type="ECO:0000269" key="11">
    <source>
    </source>
</evidence>
<evidence type="ECO:0000269" key="12">
    <source>
    </source>
</evidence>
<evidence type="ECO:0000305" key="13"/>
<organism>
    <name type="scientific">Homo sapiens</name>
    <name type="common">Human</name>
    <dbReference type="NCBI Taxonomy" id="9606"/>
    <lineage>
        <taxon>Eukaryota</taxon>
        <taxon>Metazoa</taxon>
        <taxon>Chordata</taxon>
        <taxon>Craniata</taxon>
        <taxon>Vertebrata</taxon>
        <taxon>Euteleostomi</taxon>
        <taxon>Mammalia</taxon>
        <taxon>Eutheria</taxon>
        <taxon>Euarchontoglires</taxon>
        <taxon>Primates</taxon>
        <taxon>Haplorrhini</taxon>
        <taxon>Catarrhini</taxon>
        <taxon>Hominidae</taxon>
        <taxon>Homo</taxon>
    </lineage>
</organism>
<comment type="function">
    <text evidence="2 6 9">Retinoids dehydrogenase/reductase with a clear preference for NADP. Displays high activity towards 9-cis, 11-cis and all-trans-retinal. Shows very weak activity towards 13-cis-retinol (PubMed:12226107, PubMed:15865448). Also exhibits activity, albeit with lower affinity than for retinaldehydes, towards lipid peroxidation products (C9 aldehydes) such as 4-hydroxynonenal and trans-2-nonenal (PubMed:15865448, PubMed:19686838). May play an important function in photoreceptor cells to detoxify 4-hydroxynonenal and potentially other toxic aldehyde products resulting from lipid peroxidation (PubMed:19686838). Has no dehydrogenase activity towards steroids (PubMed:12226107, PubMed:15865448).</text>
</comment>
<comment type="catalytic activity">
    <reaction evidence="2 6">
        <text>all-trans-retinol + NADP(+) = all-trans-retinal + NADPH + H(+)</text>
        <dbReference type="Rhea" id="RHEA:25033"/>
        <dbReference type="ChEBI" id="CHEBI:15378"/>
        <dbReference type="ChEBI" id="CHEBI:17336"/>
        <dbReference type="ChEBI" id="CHEBI:17898"/>
        <dbReference type="ChEBI" id="CHEBI:57783"/>
        <dbReference type="ChEBI" id="CHEBI:58349"/>
        <dbReference type="EC" id="1.1.1.300"/>
    </reaction>
</comment>
<comment type="catalytic activity">
    <reaction evidence="2 6">
        <text>11-cis-retinol + NADP(+) = 11-cis-retinal + NADPH + H(+)</text>
        <dbReference type="Rhea" id="RHEA:54912"/>
        <dbReference type="ChEBI" id="CHEBI:15378"/>
        <dbReference type="ChEBI" id="CHEBI:16066"/>
        <dbReference type="ChEBI" id="CHEBI:16302"/>
        <dbReference type="ChEBI" id="CHEBI:57783"/>
        <dbReference type="ChEBI" id="CHEBI:58349"/>
    </reaction>
</comment>
<comment type="catalytic activity">
    <reaction evidence="2 6">
        <text>9-cis-retinol + NADP(+) = 9-cis-retinal + NADPH + H(+)</text>
        <dbReference type="Rhea" id="RHEA:54916"/>
        <dbReference type="ChEBI" id="CHEBI:15378"/>
        <dbReference type="ChEBI" id="CHEBI:57783"/>
        <dbReference type="ChEBI" id="CHEBI:58349"/>
        <dbReference type="ChEBI" id="CHEBI:78272"/>
        <dbReference type="ChEBI" id="CHEBI:78273"/>
    </reaction>
</comment>
<comment type="catalytic activity">
    <reaction evidence="6">
        <text>a 4-hydroxynonen-1-ol + NADP(+) = a 4-hydroxynonenal + NADPH + H(+)</text>
        <dbReference type="Rhea" id="RHEA:58336"/>
        <dbReference type="ChEBI" id="CHEBI:15378"/>
        <dbReference type="ChEBI" id="CHEBI:57783"/>
        <dbReference type="ChEBI" id="CHEBI:58349"/>
        <dbReference type="ChEBI" id="CHEBI:142593"/>
        <dbReference type="ChEBI" id="CHEBI:142606"/>
    </reaction>
</comment>
<comment type="catalytic activity">
    <reaction evidence="6">
        <text>(E)-non-2-en-1-ol + NADP(+) = (E)-non-2-enal + NADPH + H(+)</text>
        <dbReference type="Rhea" id="RHEA:58332"/>
        <dbReference type="ChEBI" id="CHEBI:15378"/>
        <dbReference type="ChEBI" id="CHEBI:57783"/>
        <dbReference type="ChEBI" id="CHEBI:58349"/>
        <dbReference type="ChEBI" id="CHEBI:142592"/>
        <dbReference type="ChEBI" id="CHEBI:142604"/>
    </reaction>
</comment>
<comment type="catalytic activity">
    <reaction evidence="6">
        <text>(Z)-non-6-en-1-ol + NADP(+) = (Z)-non-6-enal + NADPH + H(+)</text>
        <dbReference type="Rhea" id="RHEA:58328"/>
        <dbReference type="ChEBI" id="CHEBI:15378"/>
        <dbReference type="ChEBI" id="CHEBI:57783"/>
        <dbReference type="ChEBI" id="CHEBI:58349"/>
        <dbReference type="ChEBI" id="CHEBI:142591"/>
        <dbReference type="ChEBI" id="CHEBI:142603"/>
    </reaction>
</comment>
<comment type="catalytic activity">
    <reaction evidence="6">
        <text>nonan-1-ol + NADP(+) = nonanal + NADPH + H(+)</text>
        <dbReference type="Rhea" id="RHEA:58380"/>
        <dbReference type="ChEBI" id="CHEBI:15378"/>
        <dbReference type="ChEBI" id="CHEBI:35986"/>
        <dbReference type="ChEBI" id="CHEBI:57783"/>
        <dbReference type="ChEBI" id="CHEBI:58349"/>
        <dbReference type="ChEBI" id="CHEBI:84268"/>
    </reaction>
</comment>
<comment type="biophysicochemical properties">
    <kinetics>
        <KM evidence="6">1.2 uM for NADPH</KM>
        <KM evidence="6">2200 uM for NADH</KM>
        <KM evidence="6">0.04 uM for all-trans-retinal</KM>
        <KM evidence="6">0.1 uM for 11-cis-retinal</KM>
        <KM evidence="6">0.14 uM for 9-cis-retinal</KM>
        <KM evidence="6">0.16 uM for 11-cis-retinol</KM>
        <KM evidence="6">0.16 uM for 9-cis-retinol</KM>
        <KM evidence="6">0.4 uM for all-trans-retinol</KM>
        <KM evidence="6">3.1 uM for nonanal</KM>
        <KM evidence="6">20 uM for (E)-non-2-enal</KM>
        <KM evidence="6">1 uM for (Z)-non-6-enal</KM>
        <text evidence="6">kcat is 36 min(-1) for all-trans-retinal as substrate. kcat is 45 min(-1) for 11-cis-retinal as substrate. kcat is 14 min(-1) for 9-cis-retinal as substrate. kcat is 27 min(-1) for all-trans-retinol as substrate. kcat is 7 min(-1) for 11-cis-retinol as substrate. kcat is 7 min(-1) for 9-cis-retinol as substrate. kcat is 56 min(-1) for nonanal as substrate. kcat is 45 min(-1) for (Z)-non-6-enal as substrate. kcat is 28 min(-1) for (E)-non-2-enal.</text>
    </kinetics>
</comment>
<comment type="pathway">
    <text evidence="2">Cofactor metabolism; retinol metabolism.</text>
</comment>
<comment type="interaction">
    <interactant intactId="EBI-3916363">
        <id>Q96NR8</id>
    </interactant>
    <interactant intactId="EBI-12069346">
        <id>Q6IQ23-2</id>
        <label>PLEKHA7</label>
    </interactant>
    <organismsDiffer>false</organismsDiffer>
    <experiments>3</experiments>
</comment>
<comment type="interaction">
    <interactant intactId="EBI-3916363">
        <id>Q96NR8</id>
    </interactant>
    <interactant intactId="EBI-740322">
        <id>Q93062</id>
        <label>RBPMS</label>
    </interactant>
    <organismsDiffer>false</organismsDiffer>
    <experiments>3</experiments>
</comment>
<comment type="interaction">
    <interactant intactId="EBI-3916363">
        <id>Q96NR8</id>
    </interactant>
    <interactant intactId="EBI-740343">
        <id>Q93062-3</id>
        <label>RBPMS</label>
    </interactant>
    <organismsDiffer>false</organismsDiffer>
    <experiments>3</experiments>
</comment>
<comment type="interaction">
    <interactant intactId="EBI-3916363">
        <id>Q96NR8</id>
    </interactant>
    <interactant intactId="EBI-3390054">
        <id>P0CG48</id>
        <label>UBC</label>
    </interactant>
    <organismsDiffer>false</organismsDiffer>
    <experiments>2</experiments>
</comment>
<comment type="subcellular location">
    <subcellularLocation>
        <location evidence="6">Endoplasmic reticulum membrane</location>
    </subcellularLocation>
</comment>
<comment type="tissue specificity">
    <text evidence="6">Widely expressed, mostly in retina, kidney, brain, skeletal muscle, pancreas and stomach.</text>
</comment>
<comment type="disease" evidence="4 5">
    <disease id="DI-00639">
        <name>Leber congenital amaurosis 13</name>
        <acronym>LCA13</acronym>
        <description>A severe dystrophy of the retina, typically becoming evident in the first years of life. Visual function is usually poor and often accompanied by nystagmus, sluggish or near-absent pupillary responses, photophobia, high hyperopia and keratoconus.</description>
        <dbReference type="MIM" id="612712"/>
    </disease>
    <text>The disease is caused by variants affecting the gene represented in this entry.</text>
</comment>
<comment type="disease" evidence="8 10 12">
    <disease id="DI-02918">
        <name>Retinitis pigmentosa 53</name>
        <acronym>RP53</acronym>
        <description>A retinal dystrophy belonging to the group of pigmentary retinopathies. Retinitis pigmentosa is characterized by retinal pigment deposits visible on fundus examination and primary loss of rod photoreceptor cells followed by secondary loss of cone photoreceptors. Patients typically have night vision blindness and loss of midperipheral visual field. As their condition progresses, they lose their far peripheral visual field and eventually central vision as well. RP53 inheritance is autosomal dominant or autosomal recessive.</description>
        <dbReference type="MIM" id="612712"/>
    </disease>
    <text>The disease is caused by variants affecting the gene represented in this entry.</text>
</comment>
<comment type="miscellaneous">
    <text evidence="2">Shows clear specificity for the pro-S hydrogen on C4 of NADPH and the pro-R hydrogen on C15 of retinols.</text>
</comment>
<comment type="similarity">
    <text evidence="13">Belongs to the short-chain dehydrogenases/reductases (SDR) family.</text>
</comment>
<gene>
    <name type="primary">RDH12</name>
    <name type="synonym">SDR7C2</name>
</gene>
<dbReference type="EC" id="1.1.1.300" evidence="2 6"/>
<dbReference type="EMBL" id="AK054835">
    <property type="protein sequence ID" value="BAB70811.1"/>
    <property type="molecule type" value="mRNA"/>
</dbReference>
<dbReference type="EMBL" id="AK315462">
    <property type="protein sequence ID" value="BAG37849.1"/>
    <property type="molecule type" value="mRNA"/>
</dbReference>
<dbReference type="EMBL" id="AL049779">
    <property type="status" value="NOT_ANNOTATED_CDS"/>
    <property type="molecule type" value="Genomic_DNA"/>
</dbReference>
<dbReference type="EMBL" id="CH471061">
    <property type="protein sequence ID" value="EAW80951.1"/>
    <property type="molecule type" value="Genomic_DNA"/>
</dbReference>
<dbReference type="EMBL" id="BC025724">
    <property type="protein sequence ID" value="AAH25724.1"/>
    <property type="molecule type" value="mRNA"/>
</dbReference>
<dbReference type="CCDS" id="CCDS9787.1"/>
<dbReference type="RefSeq" id="NP_689656.2">
    <property type="nucleotide sequence ID" value="NM_152443.3"/>
</dbReference>
<dbReference type="RefSeq" id="XP_047286921.1">
    <property type="nucleotide sequence ID" value="XM_047430965.1"/>
</dbReference>
<dbReference type="RefSeq" id="XP_054231405.1">
    <property type="nucleotide sequence ID" value="XM_054375430.1"/>
</dbReference>
<dbReference type="RefSeq" id="XP_054231406.1">
    <property type="nucleotide sequence ID" value="XM_054375431.1"/>
</dbReference>
<dbReference type="SMR" id="Q96NR8"/>
<dbReference type="BioGRID" id="126895">
    <property type="interactions" value="56"/>
</dbReference>
<dbReference type="FunCoup" id="Q96NR8">
    <property type="interactions" value="345"/>
</dbReference>
<dbReference type="IntAct" id="Q96NR8">
    <property type="interactions" value="39"/>
</dbReference>
<dbReference type="MINT" id="Q96NR8"/>
<dbReference type="STRING" id="9606.ENSP00000449079"/>
<dbReference type="DrugBank" id="DB00162">
    <property type="generic name" value="Vitamin A"/>
</dbReference>
<dbReference type="DrugCentral" id="Q96NR8"/>
<dbReference type="SwissLipids" id="SLP:000001789"/>
<dbReference type="iPTMnet" id="Q96NR8"/>
<dbReference type="PhosphoSitePlus" id="Q96NR8"/>
<dbReference type="BioMuta" id="RDH12"/>
<dbReference type="DMDM" id="116242750"/>
<dbReference type="jPOST" id="Q96NR8"/>
<dbReference type="MassIVE" id="Q96NR8"/>
<dbReference type="PaxDb" id="9606-ENSP00000449079"/>
<dbReference type="PeptideAtlas" id="Q96NR8"/>
<dbReference type="ProteomicsDB" id="77549"/>
<dbReference type="Antibodypedia" id="24894">
    <property type="antibodies" value="97 antibodies from 18 providers"/>
</dbReference>
<dbReference type="DNASU" id="145226"/>
<dbReference type="Ensembl" id="ENST00000267502.3">
    <property type="protein sequence ID" value="ENSP00000267502.3"/>
    <property type="gene ID" value="ENSG00000139988.10"/>
</dbReference>
<dbReference type="Ensembl" id="ENST00000551171.6">
    <property type="protein sequence ID" value="ENSP00000449079.1"/>
    <property type="gene ID" value="ENSG00000139988.10"/>
</dbReference>
<dbReference type="GeneID" id="145226"/>
<dbReference type="KEGG" id="hsa:145226"/>
<dbReference type="MANE-Select" id="ENST00000551171.6">
    <property type="protein sequence ID" value="ENSP00000449079.1"/>
    <property type="RefSeq nucleotide sequence ID" value="NM_152443.3"/>
    <property type="RefSeq protein sequence ID" value="NP_689656.2"/>
</dbReference>
<dbReference type="UCSC" id="uc001xjz.5">
    <property type="organism name" value="human"/>
</dbReference>
<dbReference type="AGR" id="HGNC:19977"/>
<dbReference type="CTD" id="145226"/>
<dbReference type="DisGeNET" id="145226"/>
<dbReference type="GeneCards" id="RDH12"/>
<dbReference type="GeneReviews" id="RDH12"/>
<dbReference type="HGNC" id="HGNC:19977">
    <property type="gene designation" value="RDH12"/>
</dbReference>
<dbReference type="HPA" id="ENSG00000139988">
    <property type="expression patterns" value="Group enriched (retina, skin)"/>
</dbReference>
<dbReference type="MalaCards" id="RDH12"/>
<dbReference type="MIM" id="608830">
    <property type="type" value="gene"/>
</dbReference>
<dbReference type="MIM" id="612712">
    <property type="type" value="phenotype"/>
</dbReference>
<dbReference type="neXtProt" id="NX_Q96NR8"/>
<dbReference type="OpenTargets" id="ENSG00000139988"/>
<dbReference type="Orphanet" id="65">
    <property type="disease" value="Leber congenital amaurosis"/>
</dbReference>
<dbReference type="Orphanet" id="791">
    <property type="disease" value="Retinitis pigmentosa"/>
</dbReference>
<dbReference type="PharmGKB" id="PA134864793"/>
<dbReference type="VEuPathDB" id="HostDB:ENSG00000139988"/>
<dbReference type="eggNOG" id="KOG1208">
    <property type="taxonomic scope" value="Eukaryota"/>
</dbReference>
<dbReference type="GeneTree" id="ENSGT00940000161505"/>
<dbReference type="HOGENOM" id="CLU_010194_44_5_1"/>
<dbReference type="InParanoid" id="Q96NR8"/>
<dbReference type="OMA" id="SDCKKTW"/>
<dbReference type="OrthoDB" id="191139at2759"/>
<dbReference type="PAN-GO" id="Q96NR8">
    <property type="GO annotations" value="0 GO annotations based on evolutionary models"/>
</dbReference>
<dbReference type="PhylomeDB" id="Q96NR8"/>
<dbReference type="TreeFam" id="TF105429"/>
<dbReference type="BioCyc" id="MetaCyc:ENSG00000139988-MONOMER"/>
<dbReference type="BRENDA" id="1.1.1.105">
    <property type="organism ID" value="2681"/>
</dbReference>
<dbReference type="BRENDA" id="1.1.1.300">
    <property type="organism ID" value="2681"/>
</dbReference>
<dbReference type="PathwayCommons" id="Q96NR8"/>
<dbReference type="Reactome" id="R-HSA-2453902">
    <property type="pathway name" value="The canonical retinoid cycle in rods (twilight vision)"/>
</dbReference>
<dbReference type="Reactome" id="R-HSA-9918440">
    <property type="pathway name" value="Defective visual phototransduction due to RDH12 loss of function"/>
</dbReference>
<dbReference type="SignaLink" id="Q96NR8"/>
<dbReference type="UniPathway" id="UPA00912"/>
<dbReference type="BioGRID-ORCS" id="145226">
    <property type="hits" value="10 hits in 1147 CRISPR screens"/>
</dbReference>
<dbReference type="GeneWiki" id="RDH12"/>
<dbReference type="GenomeRNAi" id="145226"/>
<dbReference type="Pharos" id="Q96NR8">
    <property type="development level" value="Tbio"/>
</dbReference>
<dbReference type="PRO" id="PR:Q96NR8"/>
<dbReference type="Proteomes" id="UP000005640">
    <property type="component" value="Chromosome 14"/>
</dbReference>
<dbReference type="RNAct" id="Q96NR8">
    <property type="molecule type" value="protein"/>
</dbReference>
<dbReference type="Bgee" id="ENSG00000139988">
    <property type="expression patterns" value="Expressed in upper arm skin and 122 other cell types or tissues"/>
</dbReference>
<dbReference type="ExpressionAtlas" id="Q96NR8">
    <property type="expression patterns" value="baseline and differential"/>
</dbReference>
<dbReference type="GO" id="GO:0005789">
    <property type="term" value="C:endoplasmic reticulum membrane"/>
    <property type="evidence" value="ECO:0007669"/>
    <property type="project" value="UniProtKB-SubCell"/>
</dbReference>
<dbReference type="GO" id="GO:0001917">
    <property type="term" value="C:photoreceptor inner segment"/>
    <property type="evidence" value="ECO:0000250"/>
    <property type="project" value="UniProtKB"/>
</dbReference>
<dbReference type="GO" id="GO:0060342">
    <property type="term" value="C:photoreceptor inner segment membrane"/>
    <property type="evidence" value="ECO:0000304"/>
    <property type="project" value="Reactome"/>
</dbReference>
<dbReference type="GO" id="GO:0102354">
    <property type="term" value="F:11-cis-retinol dehydrogenase activity"/>
    <property type="evidence" value="ECO:0007669"/>
    <property type="project" value="RHEA"/>
</dbReference>
<dbReference type="GO" id="GO:0004745">
    <property type="term" value="F:all-trans-retinol dehydrogenase (NAD+) activity"/>
    <property type="evidence" value="ECO:0000314"/>
    <property type="project" value="UniProtKB"/>
</dbReference>
<dbReference type="GO" id="GO:0052650">
    <property type="term" value="F:all-trans-retinol dehydrogenase (NADP+) activity"/>
    <property type="evidence" value="ECO:0000314"/>
    <property type="project" value="UniProtKB"/>
</dbReference>
<dbReference type="GO" id="GO:0110095">
    <property type="term" value="P:cellular detoxification of aldehyde"/>
    <property type="evidence" value="ECO:0000314"/>
    <property type="project" value="UniProtKB"/>
</dbReference>
<dbReference type="GO" id="GO:0045494">
    <property type="term" value="P:photoreceptor cell maintenance"/>
    <property type="evidence" value="ECO:0000304"/>
    <property type="project" value="UniProtKB"/>
</dbReference>
<dbReference type="GO" id="GO:0001523">
    <property type="term" value="P:retinoid metabolic process"/>
    <property type="evidence" value="ECO:0000304"/>
    <property type="project" value="Reactome"/>
</dbReference>
<dbReference type="GO" id="GO:0042572">
    <property type="term" value="P:retinol metabolic process"/>
    <property type="evidence" value="ECO:0000314"/>
    <property type="project" value="UniProtKB"/>
</dbReference>
<dbReference type="GO" id="GO:0007601">
    <property type="term" value="P:visual perception"/>
    <property type="evidence" value="ECO:0000315"/>
    <property type="project" value="UniProtKB"/>
</dbReference>
<dbReference type="CDD" id="cd09807">
    <property type="entry name" value="retinol-DH_like_SDR_c"/>
    <property type="match status" value="1"/>
</dbReference>
<dbReference type="FunFam" id="3.40.50.720:FF:000145">
    <property type="entry name" value="Retinol dehydrogenase 12"/>
    <property type="match status" value="1"/>
</dbReference>
<dbReference type="Gene3D" id="3.40.50.720">
    <property type="entry name" value="NAD(P)-binding Rossmann-like Domain"/>
    <property type="match status" value="1"/>
</dbReference>
<dbReference type="InterPro" id="IPR036291">
    <property type="entry name" value="NAD(P)-bd_dom_sf"/>
</dbReference>
<dbReference type="InterPro" id="IPR002347">
    <property type="entry name" value="SDR_fam"/>
</dbReference>
<dbReference type="PANTHER" id="PTHR43157">
    <property type="entry name" value="PHOSPHATIDYLINOSITOL-GLYCAN BIOSYNTHESIS CLASS F PROTEIN-RELATED"/>
    <property type="match status" value="1"/>
</dbReference>
<dbReference type="PANTHER" id="PTHR43157:SF32">
    <property type="entry name" value="RETINOL DEHYDROGENASE 12"/>
    <property type="match status" value="1"/>
</dbReference>
<dbReference type="Pfam" id="PF00106">
    <property type="entry name" value="adh_short"/>
    <property type="match status" value="1"/>
</dbReference>
<dbReference type="PRINTS" id="PR00081">
    <property type="entry name" value="GDHRDH"/>
</dbReference>
<dbReference type="PRINTS" id="PR00080">
    <property type="entry name" value="SDRFAMILY"/>
</dbReference>
<dbReference type="SUPFAM" id="SSF51735">
    <property type="entry name" value="NAD(P)-binding Rossmann-fold domains"/>
    <property type="match status" value="1"/>
</dbReference>
<reference key="1">
    <citation type="journal article" date="2004" name="Nat. Genet.">
        <title>Complete sequencing and characterization of 21,243 full-length human cDNAs.</title>
        <authorList>
            <person name="Ota T."/>
            <person name="Suzuki Y."/>
            <person name="Nishikawa T."/>
            <person name="Otsuki T."/>
            <person name="Sugiyama T."/>
            <person name="Irie R."/>
            <person name="Wakamatsu A."/>
            <person name="Hayashi K."/>
            <person name="Sato H."/>
            <person name="Nagai K."/>
            <person name="Kimura K."/>
            <person name="Makita H."/>
            <person name="Sekine M."/>
            <person name="Obayashi M."/>
            <person name="Nishi T."/>
            <person name="Shibahara T."/>
            <person name="Tanaka T."/>
            <person name="Ishii S."/>
            <person name="Yamamoto J."/>
            <person name="Saito K."/>
            <person name="Kawai Y."/>
            <person name="Isono Y."/>
            <person name="Nakamura Y."/>
            <person name="Nagahari K."/>
            <person name="Murakami K."/>
            <person name="Yasuda T."/>
            <person name="Iwayanagi T."/>
            <person name="Wagatsuma M."/>
            <person name="Shiratori A."/>
            <person name="Sudo H."/>
            <person name="Hosoiri T."/>
            <person name="Kaku Y."/>
            <person name="Kodaira H."/>
            <person name="Kondo H."/>
            <person name="Sugawara M."/>
            <person name="Takahashi M."/>
            <person name="Kanda K."/>
            <person name="Yokoi T."/>
            <person name="Furuya T."/>
            <person name="Kikkawa E."/>
            <person name="Omura Y."/>
            <person name="Abe K."/>
            <person name="Kamihara K."/>
            <person name="Katsuta N."/>
            <person name="Sato K."/>
            <person name="Tanikawa M."/>
            <person name="Yamazaki M."/>
            <person name="Ninomiya K."/>
            <person name="Ishibashi T."/>
            <person name="Yamashita H."/>
            <person name="Murakawa K."/>
            <person name="Fujimori K."/>
            <person name="Tanai H."/>
            <person name="Kimata M."/>
            <person name="Watanabe M."/>
            <person name="Hiraoka S."/>
            <person name="Chiba Y."/>
            <person name="Ishida S."/>
            <person name="Ono Y."/>
            <person name="Takiguchi S."/>
            <person name="Watanabe S."/>
            <person name="Yosida M."/>
            <person name="Hotuta T."/>
            <person name="Kusano J."/>
            <person name="Kanehori K."/>
            <person name="Takahashi-Fujii A."/>
            <person name="Hara H."/>
            <person name="Tanase T.-O."/>
            <person name="Nomura Y."/>
            <person name="Togiya S."/>
            <person name="Komai F."/>
            <person name="Hara R."/>
            <person name="Takeuchi K."/>
            <person name="Arita M."/>
            <person name="Imose N."/>
            <person name="Musashino K."/>
            <person name="Yuuki H."/>
            <person name="Oshima A."/>
            <person name="Sasaki N."/>
            <person name="Aotsuka S."/>
            <person name="Yoshikawa Y."/>
            <person name="Matsunawa H."/>
            <person name="Ichihara T."/>
            <person name="Shiohata N."/>
            <person name="Sano S."/>
            <person name="Moriya S."/>
            <person name="Momiyama H."/>
            <person name="Satoh N."/>
            <person name="Takami S."/>
            <person name="Terashima Y."/>
            <person name="Suzuki O."/>
            <person name="Nakagawa S."/>
            <person name="Senoh A."/>
            <person name="Mizoguchi H."/>
            <person name="Goto Y."/>
            <person name="Shimizu F."/>
            <person name="Wakebe H."/>
            <person name="Hishigaki H."/>
            <person name="Watanabe T."/>
            <person name="Sugiyama A."/>
            <person name="Takemoto M."/>
            <person name="Kawakami B."/>
            <person name="Yamazaki M."/>
            <person name="Watanabe K."/>
            <person name="Kumagai A."/>
            <person name="Itakura S."/>
            <person name="Fukuzumi Y."/>
            <person name="Fujimori Y."/>
            <person name="Komiyama M."/>
            <person name="Tashiro H."/>
            <person name="Tanigami A."/>
            <person name="Fujiwara T."/>
            <person name="Ono T."/>
            <person name="Yamada K."/>
            <person name="Fujii Y."/>
            <person name="Ozaki K."/>
            <person name="Hirao M."/>
            <person name="Ohmori Y."/>
            <person name="Kawabata A."/>
            <person name="Hikiji T."/>
            <person name="Kobatake N."/>
            <person name="Inagaki H."/>
            <person name="Ikema Y."/>
            <person name="Okamoto S."/>
            <person name="Okitani R."/>
            <person name="Kawakami T."/>
            <person name="Noguchi S."/>
            <person name="Itoh T."/>
            <person name="Shigeta K."/>
            <person name="Senba T."/>
            <person name="Matsumura K."/>
            <person name="Nakajima Y."/>
            <person name="Mizuno T."/>
            <person name="Morinaga M."/>
            <person name="Sasaki M."/>
            <person name="Togashi T."/>
            <person name="Oyama M."/>
            <person name="Hata H."/>
            <person name="Watanabe M."/>
            <person name="Komatsu T."/>
            <person name="Mizushima-Sugano J."/>
            <person name="Satoh T."/>
            <person name="Shirai Y."/>
            <person name="Takahashi Y."/>
            <person name="Nakagawa K."/>
            <person name="Okumura K."/>
            <person name="Nagase T."/>
            <person name="Nomura N."/>
            <person name="Kikuchi H."/>
            <person name="Masuho Y."/>
            <person name="Yamashita R."/>
            <person name="Nakai K."/>
            <person name="Yada T."/>
            <person name="Nakamura Y."/>
            <person name="Ohara O."/>
            <person name="Isogai T."/>
            <person name="Sugano S."/>
        </authorList>
    </citation>
    <scope>NUCLEOTIDE SEQUENCE [LARGE SCALE MRNA]</scope>
    <scope>VARIANT GLN-161</scope>
    <source>
        <tissue>Cerebellum</tissue>
        <tissue>Kidney</tissue>
    </source>
</reference>
<reference key="2">
    <citation type="journal article" date="2003" name="Nature">
        <title>The DNA sequence and analysis of human chromosome 14.</title>
        <authorList>
            <person name="Heilig R."/>
            <person name="Eckenberg R."/>
            <person name="Petit J.-L."/>
            <person name="Fonknechten N."/>
            <person name="Da Silva C."/>
            <person name="Cattolico L."/>
            <person name="Levy M."/>
            <person name="Barbe V."/>
            <person name="De Berardinis V."/>
            <person name="Ureta-Vidal A."/>
            <person name="Pelletier E."/>
            <person name="Vico V."/>
            <person name="Anthouard V."/>
            <person name="Rowen L."/>
            <person name="Madan A."/>
            <person name="Qin S."/>
            <person name="Sun H."/>
            <person name="Du H."/>
            <person name="Pepin K."/>
            <person name="Artiguenave F."/>
            <person name="Robert C."/>
            <person name="Cruaud C."/>
            <person name="Bruels T."/>
            <person name="Jaillon O."/>
            <person name="Friedlander L."/>
            <person name="Samson G."/>
            <person name="Brottier P."/>
            <person name="Cure S."/>
            <person name="Segurens B."/>
            <person name="Aniere F."/>
            <person name="Samain S."/>
            <person name="Crespeau H."/>
            <person name="Abbasi N."/>
            <person name="Aiach N."/>
            <person name="Boscus D."/>
            <person name="Dickhoff R."/>
            <person name="Dors M."/>
            <person name="Dubois I."/>
            <person name="Friedman C."/>
            <person name="Gouyvenoux M."/>
            <person name="James R."/>
            <person name="Madan A."/>
            <person name="Mairey-Estrada B."/>
            <person name="Mangenot S."/>
            <person name="Martins N."/>
            <person name="Menard M."/>
            <person name="Oztas S."/>
            <person name="Ratcliffe A."/>
            <person name="Shaffer T."/>
            <person name="Trask B."/>
            <person name="Vacherie B."/>
            <person name="Bellemere C."/>
            <person name="Belser C."/>
            <person name="Besnard-Gonnet M."/>
            <person name="Bartol-Mavel D."/>
            <person name="Boutard M."/>
            <person name="Briez-Silla S."/>
            <person name="Combette S."/>
            <person name="Dufosse-Laurent V."/>
            <person name="Ferron C."/>
            <person name="Lechaplais C."/>
            <person name="Louesse C."/>
            <person name="Muselet D."/>
            <person name="Magdelenat G."/>
            <person name="Pateau E."/>
            <person name="Petit E."/>
            <person name="Sirvain-Trukniewicz P."/>
            <person name="Trybou A."/>
            <person name="Vega-Czarny N."/>
            <person name="Bataille E."/>
            <person name="Bluet E."/>
            <person name="Bordelais I."/>
            <person name="Dubois M."/>
            <person name="Dumont C."/>
            <person name="Guerin T."/>
            <person name="Haffray S."/>
            <person name="Hammadi R."/>
            <person name="Muanga J."/>
            <person name="Pellouin V."/>
            <person name="Robert D."/>
            <person name="Wunderle E."/>
            <person name="Gauguet G."/>
            <person name="Roy A."/>
            <person name="Sainte-Marthe L."/>
            <person name="Verdier J."/>
            <person name="Verdier-Discala C."/>
            <person name="Hillier L.W."/>
            <person name="Fulton L."/>
            <person name="McPherson J."/>
            <person name="Matsuda F."/>
            <person name="Wilson R."/>
            <person name="Scarpelli C."/>
            <person name="Gyapay G."/>
            <person name="Wincker P."/>
            <person name="Saurin W."/>
            <person name="Quetier F."/>
            <person name="Waterston R."/>
            <person name="Hood L."/>
            <person name="Weissenbach J."/>
        </authorList>
    </citation>
    <scope>NUCLEOTIDE SEQUENCE [LARGE SCALE GENOMIC DNA]</scope>
</reference>
<reference key="3">
    <citation type="submission" date="2005-07" db="EMBL/GenBank/DDBJ databases">
        <authorList>
            <person name="Mural R.J."/>
            <person name="Istrail S."/>
            <person name="Sutton G.G."/>
            <person name="Florea L."/>
            <person name="Halpern A.L."/>
            <person name="Mobarry C.M."/>
            <person name="Lippert R."/>
            <person name="Walenz B."/>
            <person name="Shatkay H."/>
            <person name="Dew I."/>
            <person name="Miller J.R."/>
            <person name="Flanigan M.J."/>
            <person name="Edwards N.J."/>
            <person name="Bolanos R."/>
            <person name="Fasulo D."/>
            <person name="Halldorsson B.V."/>
            <person name="Hannenhalli S."/>
            <person name="Turner R."/>
            <person name="Yooseph S."/>
            <person name="Lu F."/>
            <person name="Nusskern D.R."/>
            <person name="Shue B.C."/>
            <person name="Zheng X.H."/>
            <person name="Zhong F."/>
            <person name="Delcher A.L."/>
            <person name="Huson D.H."/>
            <person name="Kravitz S.A."/>
            <person name="Mouchard L."/>
            <person name="Reinert K."/>
            <person name="Remington K.A."/>
            <person name="Clark A.G."/>
            <person name="Waterman M.S."/>
            <person name="Eichler E.E."/>
            <person name="Adams M.D."/>
            <person name="Hunkapiller M.W."/>
            <person name="Myers E.W."/>
            <person name="Venter J.C."/>
        </authorList>
    </citation>
    <scope>NUCLEOTIDE SEQUENCE [LARGE SCALE GENOMIC DNA]</scope>
</reference>
<reference key="4">
    <citation type="journal article" date="2004" name="Genome Res.">
        <title>The status, quality, and expansion of the NIH full-length cDNA project: the Mammalian Gene Collection (MGC).</title>
        <authorList>
            <consortium name="The MGC Project Team"/>
        </authorList>
    </citation>
    <scope>NUCLEOTIDE SEQUENCE [LARGE SCALE MRNA]</scope>
    <source>
        <tissue>Brain</tissue>
    </source>
</reference>
<reference key="5">
    <citation type="journal article" date="2002" name="J. Biol. Chem.">
        <title>Dual-substrate specificity short chain retinol dehydrogenases from the vertebrate retina.</title>
        <authorList>
            <person name="Haeseleer F."/>
            <person name="Jang G.-F."/>
            <person name="Imanishi Y."/>
            <person name="Driessen C.A.G.G."/>
            <person name="Matsumura M."/>
            <person name="Nelson P.S."/>
            <person name="Palczewski K."/>
        </authorList>
    </citation>
    <scope>FUNCTION</scope>
    <scope>CATALYTIC ACTIVITY</scope>
    <scope>SUBSTRATE SPECIFICITY</scope>
</reference>
<reference key="6">
    <citation type="journal article" date="2005" name="Biochemistry">
        <title>Biochemical properties of purified human retinol dehydrogenase 12 (RDH12): catalytic efficiency toward retinoids and C9 aldehydes and effects of cellular retinol-binding protein type I (CRBPI) and cellular retinaldehyde-binding protein (CRALBP) on the oxidation and reduction of retinoids.</title>
        <authorList>
            <person name="Belyaeva O.V."/>
            <person name="Korkina O.V."/>
            <person name="Stetsenko A.V."/>
            <person name="Kim T."/>
            <person name="Nelson P.S."/>
            <person name="Kedishvili N.Y."/>
        </authorList>
    </citation>
    <scope>CATALYTIC ACTIVITY</scope>
    <scope>BIOPHYSICOCHEMICAL PROPERTIES</scope>
    <scope>TISSUE SPECIFICITY</scope>
    <scope>SUBCELLULAR LOCATION</scope>
    <scope>SUBSTRATE SPECIFICITY</scope>
    <scope>FUNCTION</scope>
</reference>
<reference key="7">
    <citation type="journal article" date="2010" name="Free Radic. Biol. Med.">
        <title>Retinol dehydrogenase 12 detoxifies 4-hydroxynonenal in photoreceptor cells.</title>
        <authorList>
            <person name="Marchette L.D."/>
            <person name="Thompson D.A."/>
            <person name="Kravtsova M."/>
            <person name="Ngansop T.N."/>
            <person name="Mandal M.N."/>
            <person name="Kasus-Jacobi A."/>
        </authorList>
    </citation>
    <scope>FUNCTION</scope>
    <scope>CHARACTERIZATION OF VARIANT GLN-161</scope>
</reference>
<reference key="8">
    <citation type="journal article" date="2004" name="Am. J. Hum. Genet.">
        <title>Retinal dehydrogenase 12 (RDH12) mutations in Leber congenital amaurosis.</title>
        <authorList>
            <person name="Perrault I."/>
            <person name="Hanein S."/>
            <person name="Gerber S."/>
            <person name="Barbet F."/>
            <person name="Ducroq D."/>
            <person name="Dollfus H."/>
            <person name="Hamel C."/>
            <person name="Dufier J.-L."/>
            <person name="Munnich A."/>
            <person name="Kaplan J."/>
            <person name="Rozet J.-M."/>
        </authorList>
    </citation>
    <scope>VARIANTS LCA13 ASN-51; ILE-99; ASN-151; ASP-151; PRO-175 AND ALA-230</scope>
</reference>
<reference key="9">
    <citation type="journal article" date="2004" name="Nat. Genet.">
        <title>Mutations in RDH12 encoding a photoreceptor cell retinol dehydrogenase cause childhood-onset severe retinal dystrophy.</title>
        <authorList>
            <person name="Janecke A.R."/>
            <person name="Thompson D.A."/>
            <person name="Utermann G."/>
            <person name="Becker C."/>
            <person name="Huebner C.A."/>
            <person name="Schmid E."/>
            <person name="McHenry C.L."/>
            <person name="Nair A.R."/>
            <person name="Rueschendorf F."/>
            <person name="Heckenlively J."/>
            <person name="Wissinger B."/>
            <person name="Nuernberg P."/>
            <person name="Gal A."/>
        </authorList>
    </citation>
    <scope>VARIANTS LCA13 MET-49 AND CYS-226</scope>
    <scope>CHARACTERIZATION OF VARIANTS LCA13 MET-49 AND CYS-226</scope>
</reference>
<reference key="10">
    <citation type="journal article" date="2005" name="Hum. Mol. Genet.">
        <title>Retinal degeneration associated with RDH12 mutations results from decreased 11-cis retinal synthesis due to disruption of the visual cycle.</title>
        <authorList>
            <person name="Thompson D.A."/>
            <person name="Janecke A.R."/>
            <person name="Lange J."/>
            <person name="Feathers K.L."/>
            <person name="Hubner C.A."/>
            <person name="McHenry C.L."/>
            <person name="Stockton D.W."/>
            <person name="Rammesmayer G."/>
            <person name="Lupski J.R."/>
            <person name="Antinolo G."/>
            <person name="Ayuso C."/>
            <person name="Baiget M."/>
            <person name="Gouras P."/>
            <person name="Heckenlively J.R."/>
            <person name="den Hollander A."/>
            <person name="Jacobson S.G."/>
            <person name="Lewis R.A."/>
            <person name="Sieving P.A."/>
            <person name="Wissinger B."/>
            <person name="Yzer S."/>
            <person name="Zrenner E."/>
            <person name="Utermann G."/>
            <person name="Gal A."/>
        </authorList>
    </citation>
    <scope>VARIANTS RETINAL DYSTROPHY THR-47; MET-55; ILE-99; LYS-125; GLU-145; ASP-151; ILE-155; CYS-193; ASP-206; VAL-206; LEU-230; HIS-234; TRP-239; PRO-274 AND TYR-285</scope>
    <scope>VARIANTS GLN-65; ASN-101; GLN-161 AND CYS-193</scope>
    <scope>CHARACTERIZATION OF VARIANTS RETINAL DYSTROPHY THR-47; MET-55; ILE-99; LYS-125; GLU-145; ASP-151; ILE-155; CYS-193; ASP-206; VAL-206; LEU-230; HIS-234; TRP-239; PRO-274 AND TYR-285</scope>
    <scope>CHARACTERIZATION OF VARIANT GLN-161</scope>
</reference>
<reference key="11">
    <citation type="journal article" date="2009" name="Am. J. Med. Genet. A">
        <title>Genetic heterogeneity in two consanguineous families segregating early onset retinal degeneration: the pitfalls of homozygosity mapping.</title>
        <authorList>
            <person name="Benayoun L."/>
            <person name="Spiegel R."/>
            <person name="Auslender N."/>
            <person name="Abbasi A.H."/>
            <person name="Rizel L."/>
            <person name="Hujeirat Y."/>
            <person name="Salama I."/>
            <person name="Garzozi H.J."/>
            <person name="Allon-Shalev S."/>
            <person name="Ben-Yosef T."/>
        </authorList>
    </citation>
    <scope>VARIANT RP53 VAL-126</scope>
</reference>
<reference key="12">
    <citation type="journal article" date="2009" name="Mol. Vis.">
        <title>Molecular characterization of retinitis pigmentosa in Saudi Arabia.</title>
        <authorList>
            <person name="Aldahmesh M.A."/>
            <person name="Safieh L.A."/>
            <person name="Alkuraya H."/>
            <person name="Al-Rajhi A."/>
            <person name="Shamseldin H."/>
            <person name="Hashem M."/>
            <person name="Alzahrani F."/>
            <person name="Khan A.O."/>
            <person name="Alqahtani F."/>
            <person name="Rahbeeni Z."/>
            <person name="Alowain M."/>
            <person name="Khalak H."/>
            <person name="Al-Hazzaa S."/>
            <person name="Meyer B.F."/>
            <person name="Alkuraya F.S."/>
        </authorList>
    </citation>
    <scope>VARIANT RP53 ARG-76</scope>
</reference>
<reference key="13">
    <citation type="journal article" date="2011" name="PLoS ONE">
        <title>Detection of variants in 15 genes in 87 unrelated Chinese patients with Leber congenital amaurosis.</title>
        <authorList>
            <person name="Li L."/>
            <person name="Xiao X."/>
            <person name="Li S."/>
            <person name="Jia X."/>
            <person name="Wang P."/>
            <person name="Guo X."/>
            <person name="Jiao X."/>
            <person name="Zhang Q."/>
            <person name="Hejtmancik J.F."/>
        </authorList>
    </citation>
    <scope>VARIANTS VAL-79 AND GLN-161</scope>
</reference>
<reference key="14">
    <citation type="journal article" date="2015" name="J. Ophthalmol.">
        <title>Exome Sequencing identified a recessive RDH12 mutation in a family with severe early-onset retinitis pigmentosa.</title>
        <authorList>
            <person name="Gong B."/>
            <person name="Wei B."/>
            <person name="Huang L."/>
            <person name="Hao J."/>
            <person name="Li X."/>
            <person name="Yang Y."/>
            <person name="Zhou Y."/>
            <person name="Hao F."/>
            <person name="Cui Z."/>
            <person name="Zhang D."/>
            <person name="Wang L."/>
            <person name="Zhang H."/>
        </authorList>
    </citation>
    <scope>VARIANT RP53 ASP-146</scope>
</reference>
<feature type="chain" id="PRO_0000054766" description="Retinol dehydrogenase 12">
    <location>
        <begin position="1"/>
        <end position="316"/>
    </location>
</feature>
<feature type="active site" description="Proton acceptor" evidence="1">
    <location>
        <position position="200"/>
    </location>
</feature>
<feature type="binding site" evidence="1">
    <location>
        <begin position="46"/>
        <end position="52"/>
    </location>
    <ligand>
        <name>NADP(+)</name>
        <dbReference type="ChEBI" id="CHEBI:58349"/>
    </ligand>
</feature>
<feature type="binding site" evidence="1">
    <location>
        <position position="175"/>
    </location>
    <ligand>
        <name>substrate</name>
    </ligand>
</feature>
<feature type="sequence variant" id="VAR_064163" description="In retinal dystrophy; exhibits a profound loss of catalytic activity; dbSNP:rs761231974." evidence="7">
    <original>A</original>
    <variation>T</variation>
    <location>
        <position position="47"/>
    </location>
</feature>
<feature type="sequence variant" id="VAR_020858" description="In LCA13; abolishes protection against the toxicity of 4-hydroxynonenal in the retina; results in aberrant activity in interconverting isomers of retinol and retinal; the activity profiles depend on presence or absence of variant Q-161; genetic background may act as a modifier of variant effect; dbSNP:rs28940314." evidence="4 9">
    <original>T</original>
    <variation>M</variation>
    <location>
        <position position="49"/>
    </location>
</feature>
<feature type="sequence variant" id="VAR_020859" description="In LCA13; dbSNP:rs104894473." evidence="5">
    <original>I</original>
    <variation>N</variation>
    <location>
        <position position="51"/>
    </location>
</feature>
<feature type="sequence variant" id="VAR_064164" description="In retinal dystrophy; exhibits a profound loss of catalytic activity; dbSNP:rs766631462." evidence="7">
    <original>T</original>
    <variation>M</variation>
    <location>
        <position position="55"/>
    </location>
</feature>
<feature type="sequence variant" id="VAR_064165" description="In dbSNP:rs745471670." evidence="7">
    <original>R</original>
    <variation>Q</variation>
    <location>
        <position position="65"/>
    </location>
</feature>
<feature type="sequence variant" id="VAR_064166" description="In RP53; dbSNP:rs368489658." evidence="10">
    <original>G</original>
    <variation>R</variation>
    <location>
        <position position="76"/>
    </location>
</feature>
<feature type="sequence variant" id="VAR_067193" description="Found in a patient with LCA13; dbSNP:rs763414313." evidence="11">
    <original>A</original>
    <variation>V</variation>
    <location>
        <position position="79"/>
    </location>
</feature>
<feature type="sequence variant" id="VAR_020860" description="In LCA13; exhibits a profound loss of catalytic activity; dbSNP:rs28940315." evidence="5 7">
    <original>L</original>
    <variation>I</variation>
    <location>
        <position position="99"/>
    </location>
</feature>
<feature type="sequence variant" id="VAR_064167" description="In dbSNP:rs148334092." evidence="7">
    <original>D</original>
    <variation>N</variation>
    <location>
        <position position="101"/>
    </location>
</feature>
<feature type="sequence variant" id="VAR_064168" description="In retinal dystrophy; exhibits a profound loss of catalytic activity." evidence="7">
    <original>N</original>
    <variation>K</variation>
    <location>
        <position position="125"/>
    </location>
</feature>
<feature type="sequence variant" id="VAR_064169" description="In RP53; dbSNP:rs202126574." evidence="8">
    <original>A</original>
    <variation>V</variation>
    <location>
        <position position="126"/>
    </location>
</feature>
<feature type="sequence variant" id="VAR_064170" description="In retinal dystrophy; exhibits a profound loss of catalytic activity; dbSNP:rs907600014." evidence="7">
    <original>G</original>
    <variation>E</variation>
    <location>
        <position position="145"/>
    </location>
</feature>
<feature type="sequence variant" id="VAR_081222" description="In RP53; uncertain significance; dbSNP:rs116649873." evidence="12">
    <original>V</original>
    <variation>D</variation>
    <location>
        <position position="146"/>
    </location>
</feature>
<feature type="sequence variant" id="VAR_020861" description="In LCA13; exhibits a profound loss of catalytic activity; dbSNP:rs104894475." evidence="5 7">
    <original>H</original>
    <variation>D</variation>
    <location>
        <position position="151"/>
    </location>
</feature>
<feature type="sequence variant" id="VAR_020862" description="In LCA13; dbSNP:rs104894475." evidence="5">
    <original>H</original>
    <variation>N</variation>
    <location>
        <position position="151"/>
    </location>
</feature>
<feature type="sequence variant" id="VAR_064171" description="In retinal dystrophy; exhibits a profound loss of catalytic activity; dbSNP:rs121434337." evidence="7">
    <original>T</original>
    <variation>I</variation>
    <location>
        <position position="155"/>
    </location>
</feature>
<feature type="sequence variant" id="VAR_028281" description="Does not affect the protection against the toxicity of 4-hydroxynonenal in the retina; dbSNP:rs17852293." evidence="3 7 9 11">
    <original>R</original>
    <variation>Q</variation>
    <location>
        <position position="161"/>
    </location>
</feature>
<feature type="sequence variant" id="VAR_020863" description="In LCA13; dbSNP:rs104894472." evidence="5">
    <original>S</original>
    <variation>P</variation>
    <location>
        <position position="175"/>
    </location>
</feature>
<feature type="sequence variant" id="VAR_064172" description="In retinal dystrophy; uncertain significance; dbSNP:rs148629905." evidence="7">
    <original>R</original>
    <variation>C</variation>
    <location>
        <position position="193"/>
    </location>
</feature>
<feature type="sequence variant" id="VAR_064173" description="In retinal dystrophy; exhibits a profound loss of catalytic activity." evidence="7">
    <original>A</original>
    <variation>D</variation>
    <location>
        <position position="206"/>
    </location>
</feature>
<feature type="sequence variant" id="VAR_064174" description="In retinal dystrophy; uncertain significance; dbSNP:rs1254096311." evidence="7">
    <original>A</original>
    <variation>V</variation>
    <location>
        <position position="206"/>
    </location>
</feature>
<feature type="sequence variant" id="VAR_020864" description="In LCA13; diminished activity in interconverting isomers of retinol and retinal; dbSNP:rs28940313." evidence="4">
    <original>Y</original>
    <variation>C</variation>
    <location>
        <position position="226"/>
    </location>
</feature>
<feature type="sequence variant" id="VAR_020865" description="In LCA13; dbSNP:rs104894476." evidence="5">
    <original>P</original>
    <variation>A</variation>
    <location>
        <position position="230"/>
    </location>
</feature>
<feature type="sequence variant" id="VAR_064175" description="In retinal dystrophy; uncertain significance." evidence="7">
    <original>P</original>
    <variation>L</variation>
    <location>
        <position position="230"/>
    </location>
</feature>
<feature type="sequence variant" id="VAR_064176" description="In retinal dystrophy; uncertain significance; exhibits a loss of catalytic activity; dbSNP:rs750636662." evidence="7">
    <original>R</original>
    <variation>H</variation>
    <location>
        <position position="234"/>
    </location>
</feature>
<feature type="sequence variant" id="VAR_064177" description="In retinal dystrophy; exhibits a profound loss of catalytic activity; dbSNP:rs751589863." evidence="7">
    <original>R</original>
    <variation>W</variation>
    <location>
        <position position="239"/>
    </location>
</feature>
<feature type="sequence variant" id="VAR_064178" description="In retinal dystrophy; exhibits a profound loss of catalytic activity." evidence="7">
    <original>L</original>
    <variation>P</variation>
    <location>
        <position position="274"/>
    </location>
</feature>
<feature type="sequence variant" id="VAR_064179" description="In retinal dystrophy; exhibits a profound loss of catalytic activity; dbSNP:rs973306929." evidence="7">
    <original>C</original>
    <variation>Y</variation>
    <location>
        <position position="285"/>
    </location>
</feature>
<sequence length="316" mass="35094">MLVTLGLLTSFFSFLYMVAPSIRKFFAGGVCRTNVQLPGKVVVITGANTGIGKETARELASRGARVYIACRDVLKGESAASEIRVDTKNSQVLVRKLDLSDTKSIRAFAEGFLAEEKQLHILINNAGVMMCPYSKTADGFETHLGVNHLGHFLLTYLLLERLKVSAPARVVNVSSVAHHIGKIPFHDLQSEKRYSRGFAYCHSKLANVLFTRELAKRLQGTGVTTYAVHPGVVRSELVRHSSLLCLLWRLFSPFVKTAREGAQTSLHCALAEGLEPLSGKYFSDCKRTWVSPRARNNKTAERLWNVSCELLGIRWE</sequence>
<name>RDH12_HUMAN</name>
<protein>
    <recommendedName>
        <fullName>Retinol dehydrogenase 12</fullName>
        <ecNumber evidence="2 6">1.1.1.300</ecNumber>
    </recommendedName>
    <alternativeName>
        <fullName>All-trans and 9-cis retinol dehydrogenase</fullName>
    </alternativeName>
    <alternativeName>
        <fullName>Short chain dehydrogenase/reductase family 7C member 2</fullName>
    </alternativeName>
</protein>
<keyword id="KW-0225">Disease variant</keyword>
<keyword id="KW-0256">Endoplasmic reticulum</keyword>
<keyword id="KW-0901">Leber congenital amaurosis</keyword>
<keyword id="KW-0443">Lipid metabolism</keyword>
<keyword id="KW-0472">Membrane</keyword>
<keyword id="KW-0521">NADP</keyword>
<keyword id="KW-0560">Oxidoreductase</keyword>
<keyword id="KW-1267">Proteomics identification</keyword>
<keyword id="KW-1185">Reference proteome</keyword>
<keyword id="KW-0682">Retinitis pigmentosa</keyword>
<keyword id="KW-0716">Sensory transduction</keyword>
<keyword id="KW-0844">Vision</keyword>